<evidence type="ECO:0000255" key="1">
    <source>
        <dbReference type="HAMAP-Rule" id="MF_03039"/>
    </source>
</evidence>
<name>CFD1_CANGA</name>
<reference key="1">
    <citation type="journal article" date="2004" name="Nature">
        <title>Genome evolution in yeasts.</title>
        <authorList>
            <person name="Dujon B."/>
            <person name="Sherman D."/>
            <person name="Fischer G."/>
            <person name="Durrens P."/>
            <person name="Casaregola S."/>
            <person name="Lafontaine I."/>
            <person name="de Montigny J."/>
            <person name="Marck C."/>
            <person name="Neuveglise C."/>
            <person name="Talla E."/>
            <person name="Goffard N."/>
            <person name="Frangeul L."/>
            <person name="Aigle M."/>
            <person name="Anthouard V."/>
            <person name="Babour A."/>
            <person name="Barbe V."/>
            <person name="Barnay S."/>
            <person name="Blanchin S."/>
            <person name="Beckerich J.-M."/>
            <person name="Beyne E."/>
            <person name="Bleykasten C."/>
            <person name="Boisrame A."/>
            <person name="Boyer J."/>
            <person name="Cattolico L."/>
            <person name="Confanioleri F."/>
            <person name="de Daruvar A."/>
            <person name="Despons L."/>
            <person name="Fabre E."/>
            <person name="Fairhead C."/>
            <person name="Ferry-Dumazet H."/>
            <person name="Groppi A."/>
            <person name="Hantraye F."/>
            <person name="Hennequin C."/>
            <person name="Jauniaux N."/>
            <person name="Joyet P."/>
            <person name="Kachouri R."/>
            <person name="Kerrest A."/>
            <person name="Koszul R."/>
            <person name="Lemaire M."/>
            <person name="Lesur I."/>
            <person name="Ma L."/>
            <person name="Muller H."/>
            <person name="Nicaud J.-M."/>
            <person name="Nikolski M."/>
            <person name="Oztas S."/>
            <person name="Ozier-Kalogeropoulos O."/>
            <person name="Pellenz S."/>
            <person name="Potier S."/>
            <person name="Richard G.-F."/>
            <person name="Straub M.-L."/>
            <person name="Suleau A."/>
            <person name="Swennen D."/>
            <person name="Tekaia F."/>
            <person name="Wesolowski-Louvel M."/>
            <person name="Westhof E."/>
            <person name="Wirth B."/>
            <person name="Zeniou-Meyer M."/>
            <person name="Zivanovic Y."/>
            <person name="Bolotin-Fukuhara M."/>
            <person name="Thierry A."/>
            <person name="Bouchier C."/>
            <person name="Caudron B."/>
            <person name="Scarpelli C."/>
            <person name="Gaillardin C."/>
            <person name="Weissenbach J."/>
            <person name="Wincker P."/>
            <person name="Souciet J.-L."/>
        </authorList>
    </citation>
    <scope>NUCLEOTIDE SEQUENCE [LARGE SCALE GENOMIC DNA]</scope>
    <source>
        <strain>ATCC 2001 / BCRC 20586 / JCM 3761 / NBRC 0622 / NRRL Y-65 / CBS 138</strain>
    </source>
</reference>
<organism>
    <name type="scientific">Candida glabrata (strain ATCC 2001 / BCRC 20586 / JCM 3761 / NBRC 0622 / NRRL Y-65 / CBS 138)</name>
    <name type="common">Yeast</name>
    <name type="synonym">Nakaseomyces glabratus</name>
    <dbReference type="NCBI Taxonomy" id="284593"/>
    <lineage>
        <taxon>Eukaryota</taxon>
        <taxon>Fungi</taxon>
        <taxon>Dikarya</taxon>
        <taxon>Ascomycota</taxon>
        <taxon>Saccharomycotina</taxon>
        <taxon>Saccharomycetes</taxon>
        <taxon>Saccharomycetales</taxon>
        <taxon>Saccharomycetaceae</taxon>
        <taxon>Nakaseomyces</taxon>
    </lineage>
</organism>
<feature type="chain" id="PRO_0000278874" description="Cytosolic Fe-S cluster assembly factor CFD1">
    <location>
        <begin position="1"/>
        <end position="285"/>
    </location>
</feature>
<feature type="binding site" evidence="1">
    <location>
        <begin position="30"/>
        <end position="37"/>
    </location>
    <ligand>
        <name>ATP</name>
        <dbReference type="ChEBI" id="CHEBI:30616"/>
    </ligand>
</feature>
<feature type="binding site" evidence="1">
    <location>
        <position position="206"/>
    </location>
    <ligand>
        <name>[4Fe-4S] cluster</name>
        <dbReference type="ChEBI" id="CHEBI:49883"/>
        <note>ligand shared between dimeric partners</note>
    </ligand>
</feature>
<feature type="binding site" evidence="1">
    <location>
        <position position="209"/>
    </location>
    <ligand>
        <name>[4Fe-4S] cluster</name>
        <dbReference type="ChEBI" id="CHEBI:49883"/>
        <note>ligand shared between dimeric partners</note>
    </ligand>
</feature>
<gene>
    <name evidence="1" type="primary">CFD1</name>
    <name type="ordered locus">CAGL0J02112g</name>
</gene>
<protein>
    <recommendedName>
        <fullName evidence="1">Cytosolic Fe-S cluster assembly factor CFD1</fullName>
    </recommendedName>
    <alternativeName>
        <fullName evidence="1">Cytosolic Fe-S cluster-deficient protein 1</fullName>
    </alternativeName>
</protein>
<comment type="function">
    <text evidence="1">Component of the cytosolic iron-sulfur (Fe/S) protein assembly (CIA) machinery. Required for maturation of extramitochondrial Fe-S proteins. The NBP35-CFD1 heterotetramer forms a Fe-S scaffold complex, mediating the de novo assembly of an Fe-S cluster and its transfer to target apoproteins. Required for biogenesis and export of both ribosomal subunits, which may reflect a role in assembly of the Fe/S clusters in RLI1, a protein which performs rRNA processing and ribosome export.</text>
</comment>
<comment type="cofactor">
    <cofactor evidence="1">
        <name>[4Fe-4S] cluster</name>
        <dbReference type="ChEBI" id="CHEBI:49883"/>
    </cofactor>
    <text evidence="1">Binds 4 [4Fe-4S] clusters per heterotetramer. Contains two stable clusters in the N-termini of NBP35 and two labile, bridging clusters between subunits of the NBP35-CFD1 heterotetramer.</text>
</comment>
<comment type="subunit">
    <text evidence="1">Heterotetramer of 2 NBP35 and 2 CFD1 chains.</text>
</comment>
<comment type="subcellular location">
    <subcellularLocation>
        <location evidence="1">Cytoplasm</location>
    </subcellularLocation>
</comment>
<comment type="similarity">
    <text evidence="1">Belongs to the Mrp/NBP35 ATP-binding proteins family. NUBP2/CFD1 subfamily.</text>
</comment>
<dbReference type="EMBL" id="CR380956">
    <property type="protein sequence ID" value="CAG60746.1"/>
    <property type="molecule type" value="Genomic_DNA"/>
</dbReference>
<dbReference type="RefSeq" id="XP_447797.1">
    <property type="nucleotide sequence ID" value="XM_447797.1"/>
</dbReference>
<dbReference type="SMR" id="Q6FPP7"/>
<dbReference type="FunCoup" id="Q6FPP7">
    <property type="interactions" value="184"/>
</dbReference>
<dbReference type="STRING" id="284593.Q6FPP7"/>
<dbReference type="EnsemblFungi" id="CAGL0J02112g-T">
    <property type="protein sequence ID" value="CAGL0J02112g-T-p1"/>
    <property type="gene ID" value="CAGL0J02112g"/>
</dbReference>
<dbReference type="KEGG" id="cgr:2889788"/>
<dbReference type="CGD" id="CAL0133474">
    <property type="gene designation" value="CAGL0J02112g"/>
</dbReference>
<dbReference type="VEuPathDB" id="FungiDB:B1J91_J02112g"/>
<dbReference type="VEuPathDB" id="FungiDB:CAGL0J02112g"/>
<dbReference type="eggNOG" id="KOG3022">
    <property type="taxonomic scope" value="Eukaryota"/>
</dbReference>
<dbReference type="HOGENOM" id="CLU_024839_0_1_1"/>
<dbReference type="InParanoid" id="Q6FPP7"/>
<dbReference type="OMA" id="WIPVFAD"/>
<dbReference type="Proteomes" id="UP000002428">
    <property type="component" value="Chromosome J"/>
</dbReference>
<dbReference type="GO" id="GO:0005829">
    <property type="term" value="C:cytosol"/>
    <property type="evidence" value="ECO:0007669"/>
    <property type="project" value="TreeGrafter"/>
</dbReference>
<dbReference type="GO" id="GO:0051539">
    <property type="term" value="F:4 iron, 4 sulfur cluster binding"/>
    <property type="evidence" value="ECO:0007669"/>
    <property type="project" value="UniProtKB-UniRule"/>
</dbReference>
<dbReference type="GO" id="GO:0005524">
    <property type="term" value="F:ATP binding"/>
    <property type="evidence" value="ECO:0007669"/>
    <property type="project" value="UniProtKB-KW"/>
</dbReference>
<dbReference type="GO" id="GO:0140663">
    <property type="term" value="F:ATP-dependent FeS chaperone activity"/>
    <property type="evidence" value="ECO:0007669"/>
    <property type="project" value="InterPro"/>
</dbReference>
<dbReference type="GO" id="GO:0046872">
    <property type="term" value="F:metal ion binding"/>
    <property type="evidence" value="ECO:0007669"/>
    <property type="project" value="UniProtKB-KW"/>
</dbReference>
<dbReference type="GO" id="GO:0016226">
    <property type="term" value="P:iron-sulfur cluster assembly"/>
    <property type="evidence" value="ECO:0007669"/>
    <property type="project" value="UniProtKB-UniRule"/>
</dbReference>
<dbReference type="CDD" id="cd02037">
    <property type="entry name" value="Mrp_NBP35"/>
    <property type="match status" value="1"/>
</dbReference>
<dbReference type="FunFam" id="3.40.50.300:FF:001300">
    <property type="entry name" value="Cytosolic Fe-S cluster assembly factor CFD1"/>
    <property type="match status" value="1"/>
</dbReference>
<dbReference type="Gene3D" id="3.40.50.300">
    <property type="entry name" value="P-loop containing nucleotide triphosphate hydrolases"/>
    <property type="match status" value="1"/>
</dbReference>
<dbReference type="HAMAP" id="MF_02040">
    <property type="entry name" value="Mrp_NBP35"/>
    <property type="match status" value="1"/>
</dbReference>
<dbReference type="HAMAP" id="MF_03039">
    <property type="entry name" value="NUBP2"/>
    <property type="match status" value="1"/>
</dbReference>
<dbReference type="InterPro" id="IPR000808">
    <property type="entry name" value="Mrp-like_CS"/>
</dbReference>
<dbReference type="InterPro" id="IPR019591">
    <property type="entry name" value="Mrp/NBP35_ATP-bd"/>
</dbReference>
<dbReference type="InterPro" id="IPR028600">
    <property type="entry name" value="NUBP2/Cfd1_eukaryotes"/>
</dbReference>
<dbReference type="InterPro" id="IPR027417">
    <property type="entry name" value="P-loop_NTPase"/>
</dbReference>
<dbReference type="InterPro" id="IPR033756">
    <property type="entry name" value="YlxH/NBP35"/>
</dbReference>
<dbReference type="PANTHER" id="PTHR23264:SF19">
    <property type="entry name" value="CYTOSOLIC FE-S CLUSTER ASSEMBLY FACTOR NUBP2"/>
    <property type="match status" value="1"/>
</dbReference>
<dbReference type="PANTHER" id="PTHR23264">
    <property type="entry name" value="NUCLEOTIDE-BINDING PROTEIN NBP35 YEAST -RELATED"/>
    <property type="match status" value="1"/>
</dbReference>
<dbReference type="Pfam" id="PF10609">
    <property type="entry name" value="ParA"/>
    <property type="match status" value="1"/>
</dbReference>
<dbReference type="SUPFAM" id="SSF52540">
    <property type="entry name" value="P-loop containing nucleoside triphosphate hydrolases"/>
    <property type="match status" value="1"/>
</dbReference>
<dbReference type="PROSITE" id="PS01215">
    <property type="entry name" value="MRP"/>
    <property type="match status" value="1"/>
</dbReference>
<proteinExistence type="inferred from homology"/>
<keyword id="KW-0004">4Fe-4S</keyword>
<keyword id="KW-0067">ATP-binding</keyword>
<keyword id="KW-0963">Cytoplasm</keyword>
<keyword id="KW-0408">Iron</keyword>
<keyword id="KW-0411">Iron-sulfur</keyword>
<keyword id="KW-0479">Metal-binding</keyword>
<keyword id="KW-0547">Nucleotide-binding</keyword>
<keyword id="KW-1185">Reference proteome</keyword>
<sequence>MDPEEQLESTEGVPAKSLSLIKHILLVLSGKGGVGKSSVTTQTALTLCGMGYNVGVLDIDLTGPSLPRMFGIEDSSIYQSADGWMPIPVETNGKGKLCVVSLGFLLGSRGTSVVWRGPKKTSMIRQFIKDVTWGELDYLLIDTPPGTSDEHISIAEELRFTNPDGAIVVTTPQGVATADVKKEINFCRKVNLRILGVIENMSGFVCPYCTECTNIFSKGGGESLAKQFDVPYLGNIPIDPKFVDLIENQKKMEGTLVELYEKSSLYPIYLEIMKKVQEESSKPQE</sequence>
<accession>Q6FPP7</accession>